<keyword id="KW-0456">Lyase</keyword>
<keyword id="KW-0479">Metal-binding</keyword>
<keyword id="KW-1185">Reference proteome</keyword>
<comment type="function">
    <text evidence="3 4">Terpene synthase that converts its substrate farnesyl diphosphate (FPP) into the sesquiterpenes (E)-beta-farnesene and (E,E)-alpha-farnesene (PubMed:30254228). TPS11 also converts geranylgeranyl diphosphate (GGPP) into the diterpene (S)-nephthenol (PubMed:31621716).</text>
</comment>
<comment type="catalytic activity">
    <reaction evidence="3">
        <text>(2E,6E)-farnesyl diphosphate = (E)-beta-farnesene + diphosphate</text>
        <dbReference type="Rhea" id="RHEA:27425"/>
        <dbReference type="ChEBI" id="CHEBI:10418"/>
        <dbReference type="ChEBI" id="CHEBI:33019"/>
        <dbReference type="ChEBI" id="CHEBI:175763"/>
        <dbReference type="EC" id="4.2.3.47"/>
    </reaction>
    <physiologicalReaction direction="left-to-right" evidence="3">
        <dbReference type="Rhea" id="RHEA:27426"/>
    </physiologicalReaction>
</comment>
<comment type="catalytic activity">
    <reaction evidence="3">
        <text>(2E,6E)-farnesyl diphosphate = (3E,6E)-alpha-farnesene + diphosphate</text>
        <dbReference type="Rhea" id="RHEA:27421"/>
        <dbReference type="ChEBI" id="CHEBI:10280"/>
        <dbReference type="ChEBI" id="CHEBI:33019"/>
        <dbReference type="ChEBI" id="CHEBI:175763"/>
        <dbReference type="EC" id="4.2.3.46"/>
    </reaction>
    <physiologicalReaction direction="left-to-right" evidence="3">
        <dbReference type="Rhea" id="RHEA:27422"/>
    </physiologicalReaction>
</comment>
<comment type="catalytic activity">
    <reaction evidence="4">
        <text>geranylgeranyl diphosphate + H2O = (S)-(+)-nephthenol + diphosphate</text>
        <dbReference type="Rhea" id="RHEA:73995"/>
        <dbReference type="ChEBI" id="CHEBI:15377"/>
        <dbReference type="ChEBI" id="CHEBI:33019"/>
        <dbReference type="ChEBI" id="CHEBI:57533"/>
        <dbReference type="ChEBI" id="CHEBI:193073"/>
    </reaction>
    <physiologicalReaction direction="left-to-right" evidence="4">
        <dbReference type="Rhea" id="RHEA:73996"/>
    </physiologicalReaction>
</comment>
<comment type="domain">
    <text evidence="2">Contains several highly conserved motifs that are important for catalytic activity including the aspartate-rich 'DDxx(x)D/E' motif and the 'NDxxSxxxD/E' motif, both of which are involved in complexing metal ions to coordinate the binding of the isoprenyl diphosphate substrate in the active site.</text>
</comment>
<comment type="similarity">
    <text evidence="6">Belongs to the terpene synthase family.</text>
</comment>
<comment type="sequence caution" evidence="6">
    <conflict type="erroneous gene model prediction">
        <sequence resource="EMBL-CDS" id="EGC34225"/>
    </conflict>
</comment>
<organism>
    <name type="scientific">Dictyostelium purpureum</name>
    <name type="common">Slime mold</name>
    <dbReference type="NCBI Taxonomy" id="5786"/>
    <lineage>
        <taxon>Eukaryota</taxon>
        <taxon>Amoebozoa</taxon>
        <taxon>Evosea</taxon>
        <taxon>Eumycetozoa</taxon>
        <taxon>Dictyostelia</taxon>
        <taxon>Dictyosteliales</taxon>
        <taxon>Dictyosteliaceae</taxon>
        <taxon>Dictyostelium</taxon>
    </lineage>
</organism>
<protein>
    <recommendedName>
        <fullName evidence="5">Terpene synthase 11</fullName>
        <ecNumber evidence="4">4.2.3.-</ecNumber>
        <ecNumber evidence="3">4.2.3.46</ecNumber>
        <ecNumber evidence="3">4.2.3.47</ecNumber>
    </recommendedName>
</protein>
<name>TPS11_DICPU</name>
<evidence type="ECO:0000250" key="1">
    <source>
        <dbReference type="UniProtKB" id="Q54BE5"/>
    </source>
</evidence>
<evidence type="ECO:0000250" key="2">
    <source>
        <dbReference type="UniProtKB" id="Q55E23"/>
    </source>
</evidence>
<evidence type="ECO:0000269" key="3">
    <source>
    </source>
</evidence>
<evidence type="ECO:0000269" key="4">
    <source>
    </source>
</evidence>
<evidence type="ECO:0000303" key="5">
    <source>
    </source>
</evidence>
<evidence type="ECO:0000305" key="6"/>
<sequence>MDINKQKTKWDISIFKNENFTLPVIKSPFNTYYNKYIDSVINDIEEWHRECCFLGREKLKGYIESKPYLFSAYYYCHLNEKVLPFIIKFVDMFSIYDDEYLEKTNCSEDVINQFLDKNYKDKNIYGVEWFKIVEGLKKYGNKQSVNKFLKEFEFFIKNVHSIHLKENANYTNINFEEYTNTRSIDFGFDLVVSAAIIDCEEPSKEIRESSLFLTLNTKSSIICVLVNDIYSFVKESKQPDTMNYVKIMANKKKSIQKALNHTNKIINNTLKEIISIENQIKMQYKENNLYQYIERLNSVISATIYLHQNHKRYSVHNKNYINKNN</sequence>
<reference key="1">
    <citation type="journal article" date="2018" name="Sci. Rep.">
        <title>Diversity and Functional Evolution of Terpene Synthases in Dictyostelid Social Amoebae.</title>
        <authorList>
            <person name="Chen X."/>
            <person name="Kollner T.G."/>
            <person name="Shaulsky G."/>
            <person name="Jia Q."/>
            <person name="Dickschat J.S."/>
            <person name="Gershenzon J."/>
            <person name="Chen F."/>
        </authorList>
    </citation>
    <scope>NUCLEOTIDE SEQUENCE [MRNA]</scope>
    <scope>FUNCTION</scope>
    <scope>CATALYTIC ACTIVITY</scope>
    <source>
        <strain>AX1</strain>
    </source>
</reference>
<reference key="2">
    <citation type="journal article" date="2011" name="Genome Biol.">
        <title>Comparative genomics of the social amoebae Dictyostelium discoideum and Dictyostelium purpureum.</title>
        <authorList>
            <consortium name="US DOE Joint Genome Institute (JGI-PGF)"/>
            <person name="Sucgang R."/>
            <person name="Kuo A."/>
            <person name="Tian X."/>
            <person name="Salerno W."/>
            <person name="Parikh A."/>
            <person name="Feasley C.L."/>
            <person name="Dalin E."/>
            <person name="Tu H."/>
            <person name="Huang E."/>
            <person name="Barry K."/>
            <person name="Lindquist E."/>
            <person name="Shapiro H."/>
            <person name="Bruce D."/>
            <person name="Schmutz J."/>
            <person name="Salamov A."/>
            <person name="Fey P."/>
            <person name="Gaudet P."/>
            <person name="Anjard C."/>
            <person name="Babu M.M."/>
            <person name="Basu S."/>
            <person name="Bushmanova Y."/>
            <person name="van der Wel H."/>
            <person name="Katoh-Kurasawa M."/>
            <person name="Dinh C."/>
            <person name="Coutinho P.M."/>
            <person name="Saito T."/>
            <person name="Elias M."/>
            <person name="Schaap P."/>
            <person name="Kay R.R."/>
            <person name="Henrissat B."/>
            <person name="Eichinger L."/>
            <person name="Rivero F."/>
            <person name="Putnam N.H."/>
            <person name="West C.M."/>
            <person name="Loomis W.F."/>
            <person name="Chisholm R.L."/>
            <person name="Shaulsky G."/>
            <person name="Strassmann J.E."/>
            <person name="Queller D.C."/>
            <person name="Kuspa A."/>
            <person name="Grigoriev I.V."/>
        </authorList>
    </citation>
    <scope>NUCLEOTIDE SEQUENCE [LARGE SCALE GENOMIC DNA]</scope>
    <source>
        <strain>QSDP1</strain>
    </source>
</reference>
<reference key="3">
    <citation type="journal article" date="2019" name="Chem. Commun. (Camb.)">
        <title>Characterisation of three terpene synthases for beta-barbatene, beta-araneosene and nephthenol from social amoebae.</title>
        <authorList>
            <person name="Rinkel J."/>
            <person name="Koellner T.G."/>
            <person name="Chen F."/>
            <person name="Dickschat J.S."/>
        </authorList>
    </citation>
    <scope>FUNCTION</scope>
    <scope>CATALYTIC ACTIVITY</scope>
</reference>
<accession>A0A385AJN0</accession>
<accession>F0ZP92</accession>
<gene>
    <name evidence="5" type="primary">TPS11</name>
    <name type="ORF">DICPUDRAFT_153584</name>
</gene>
<proteinExistence type="evidence at protein level"/>
<dbReference type="EC" id="4.2.3.-" evidence="4"/>
<dbReference type="EC" id="4.2.3.46" evidence="3"/>
<dbReference type="EC" id="4.2.3.47" evidence="3"/>
<dbReference type="EMBL" id="MG262472">
    <property type="protein sequence ID" value="AXN72980.1"/>
    <property type="molecule type" value="mRNA"/>
</dbReference>
<dbReference type="EMBL" id="GL871106">
    <property type="protein sequence ID" value="EGC34225.1"/>
    <property type="status" value="ALT_SEQ"/>
    <property type="molecule type" value="Genomic_DNA"/>
</dbReference>
<dbReference type="RefSeq" id="XP_003289235.1">
    <property type="nucleotide sequence ID" value="XM_003289187.1"/>
</dbReference>
<dbReference type="SMR" id="A0A385AJN0"/>
<dbReference type="EnsemblProtists" id="EGC34225">
    <property type="protein sequence ID" value="EGC34225"/>
    <property type="gene ID" value="DICPUDRAFT_153584"/>
</dbReference>
<dbReference type="GeneID" id="10500221"/>
<dbReference type="KEGG" id="dpp:DICPUDRAFT_153584"/>
<dbReference type="VEuPathDB" id="AmoebaDB:DICPUDRAFT_153584"/>
<dbReference type="eggNOG" id="KOG4424">
    <property type="taxonomic scope" value="Eukaryota"/>
</dbReference>
<dbReference type="OrthoDB" id="20080at2759"/>
<dbReference type="Proteomes" id="UP000001064">
    <property type="component" value="Unassembled WGS sequence"/>
</dbReference>
<dbReference type="GO" id="GO:0016829">
    <property type="term" value="F:lyase activity"/>
    <property type="evidence" value="ECO:0007669"/>
    <property type="project" value="UniProtKB-KW"/>
</dbReference>
<dbReference type="GO" id="GO:0046872">
    <property type="term" value="F:metal ion binding"/>
    <property type="evidence" value="ECO:0007669"/>
    <property type="project" value="UniProtKB-KW"/>
</dbReference>
<dbReference type="Gene3D" id="1.10.600.10">
    <property type="entry name" value="Farnesyl Diphosphate Synthase"/>
    <property type="match status" value="1"/>
</dbReference>
<dbReference type="InterPro" id="IPR008949">
    <property type="entry name" value="Isoprenoid_synthase_dom_sf"/>
</dbReference>
<dbReference type="Pfam" id="PF19086">
    <property type="entry name" value="Terpene_syn_C_2"/>
    <property type="match status" value="1"/>
</dbReference>
<dbReference type="SUPFAM" id="SSF48576">
    <property type="entry name" value="Terpenoid synthases"/>
    <property type="match status" value="1"/>
</dbReference>
<feature type="chain" id="PRO_0000457028" description="Terpene synthase 11">
    <location>
        <begin position="1"/>
        <end position="325"/>
    </location>
</feature>
<feature type="short sequence motif" description="DDxx(x)D/E motif" evidence="1">
    <location>
        <begin position="97"/>
        <end position="102"/>
    </location>
</feature>
<feature type="short sequence motif" description="NDxxSxxxD/E motif" evidence="1">
    <location>
        <begin position="227"/>
        <end position="235"/>
    </location>
</feature>